<dbReference type="EC" id="1.-.-.-"/>
<dbReference type="EMBL" id="D86417">
    <property type="protein sequence ID" value="BAA22324.1"/>
    <property type="molecule type" value="Genomic_DNA"/>
</dbReference>
<dbReference type="EMBL" id="AL009126">
    <property type="protein sequence ID" value="CAB12574.1"/>
    <property type="molecule type" value="Genomic_DNA"/>
</dbReference>
<dbReference type="PIR" id="A69813">
    <property type="entry name" value="A69813"/>
</dbReference>
<dbReference type="RefSeq" id="NP_388626.1">
    <property type="nucleotide sequence ID" value="NC_000964.3"/>
</dbReference>
<dbReference type="RefSeq" id="WP_003242607.1">
    <property type="nucleotide sequence ID" value="NZ_OZ025638.1"/>
</dbReference>
<dbReference type="SMR" id="O34812"/>
<dbReference type="FunCoup" id="O34812">
    <property type="interactions" value="297"/>
</dbReference>
<dbReference type="STRING" id="224308.BSU07450"/>
<dbReference type="jPOST" id="O34812"/>
<dbReference type="PaxDb" id="224308-BSU07450"/>
<dbReference type="EnsemblBacteria" id="CAB12574">
    <property type="protein sequence ID" value="CAB12574"/>
    <property type="gene ID" value="BSU_07450"/>
</dbReference>
<dbReference type="GeneID" id="936106"/>
<dbReference type="KEGG" id="bsu:BSU07450"/>
<dbReference type="PATRIC" id="fig|224308.179.peg.808"/>
<dbReference type="eggNOG" id="COG2130">
    <property type="taxonomic scope" value="Bacteria"/>
</dbReference>
<dbReference type="InParanoid" id="O34812"/>
<dbReference type="OrthoDB" id="9805663at2"/>
<dbReference type="PhylomeDB" id="O34812"/>
<dbReference type="BioCyc" id="BSUB:BSU07450-MONOMER"/>
<dbReference type="Proteomes" id="UP000001570">
    <property type="component" value="Chromosome"/>
</dbReference>
<dbReference type="GO" id="GO:0016628">
    <property type="term" value="F:oxidoreductase activity, acting on the CH-CH group of donors, NAD or NADP as acceptor"/>
    <property type="evidence" value="ECO:0007669"/>
    <property type="project" value="InterPro"/>
</dbReference>
<dbReference type="GO" id="GO:0009056">
    <property type="term" value="P:catabolic process"/>
    <property type="evidence" value="ECO:0007669"/>
    <property type="project" value="UniProtKB-KW"/>
</dbReference>
<dbReference type="GO" id="GO:0009636">
    <property type="term" value="P:response to toxic substance"/>
    <property type="evidence" value="ECO:0007669"/>
    <property type="project" value="UniProtKB-KW"/>
</dbReference>
<dbReference type="CDD" id="cd05288">
    <property type="entry name" value="PGDH"/>
    <property type="match status" value="1"/>
</dbReference>
<dbReference type="FunFam" id="3.40.50.720:FF:000121">
    <property type="entry name" value="Prostaglandin reductase 2"/>
    <property type="match status" value="1"/>
</dbReference>
<dbReference type="Gene3D" id="3.90.180.10">
    <property type="entry name" value="Medium-chain alcohol dehydrogenases, catalytic domain"/>
    <property type="match status" value="1"/>
</dbReference>
<dbReference type="Gene3D" id="3.40.50.720">
    <property type="entry name" value="NAD(P)-binding Rossmann-like Domain"/>
    <property type="match status" value="1"/>
</dbReference>
<dbReference type="InterPro" id="IPR013149">
    <property type="entry name" value="ADH-like_C"/>
</dbReference>
<dbReference type="InterPro" id="IPR041694">
    <property type="entry name" value="ADH_N_2"/>
</dbReference>
<dbReference type="InterPro" id="IPR011032">
    <property type="entry name" value="GroES-like_sf"/>
</dbReference>
<dbReference type="InterPro" id="IPR045010">
    <property type="entry name" value="MDR_fam"/>
</dbReference>
<dbReference type="InterPro" id="IPR036291">
    <property type="entry name" value="NAD(P)-bd_dom_sf"/>
</dbReference>
<dbReference type="InterPro" id="IPR020843">
    <property type="entry name" value="PKS_ER"/>
</dbReference>
<dbReference type="PANTHER" id="PTHR43205">
    <property type="entry name" value="PROSTAGLANDIN REDUCTASE"/>
    <property type="match status" value="1"/>
</dbReference>
<dbReference type="PANTHER" id="PTHR43205:SF7">
    <property type="entry name" value="PROSTAGLANDIN REDUCTASE 1"/>
    <property type="match status" value="1"/>
</dbReference>
<dbReference type="Pfam" id="PF16884">
    <property type="entry name" value="ADH_N_2"/>
    <property type="match status" value="1"/>
</dbReference>
<dbReference type="Pfam" id="PF00107">
    <property type="entry name" value="ADH_zinc_N"/>
    <property type="match status" value="1"/>
</dbReference>
<dbReference type="SMART" id="SM00829">
    <property type="entry name" value="PKS_ER"/>
    <property type="match status" value="1"/>
</dbReference>
<dbReference type="SUPFAM" id="SSF50129">
    <property type="entry name" value="GroES-like"/>
    <property type="match status" value="2"/>
</dbReference>
<dbReference type="SUPFAM" id="SSF51735">
    <property type="entry name" value="NAD(P)-binding Rossmann-fold domains"/>
    <property type="match status" value="1"/>
</dbReference>
<feature type="chain" id="PRO_0000378080" description="Putative NADP-dependent oxidoreductase YfmJ">
    <location>
        <begin position="1"/>
        <end position="339"/>
    </location>
</feature>
<feature type="binding site" evidence="1">
    <location>
        <begin position="156"/>
        <end position="159"/>
    </location>
    <ligand>
        <name>NADP(+)</name>
        <dbReference type="ChEBI" id="CHEBI:58349"/>
    </ligand>
</feature>
<feature type="binding site" evidence="1">
    <location>
        <position position="182"/>
    </location>
    <ligand>
        <name>NADP(+)</name>
        <dbReference type="ChEBI" id="CHEBI:58349"/>
    </ligand>
</feature>
<feature type="binding site" evidence="1">
    <location>
        <position position="198"/>
    </location>
    <ligand>
        <name>NADP(+)</name>
        <dbReference type="ChEBI" id="CHEBI:58349"/>
    </ligand>
</feature>
<feature type="binding site" evidence="1">
    <location>
        <position position="222"/>
    </location>
    <ligand>
        <name>NADP(+)</name>
        <dbReference type="ChEBI" id="CHEBI:58349"/>
    </ligand>
</feature>
<feature type="binding site" evidence="1">
    <location>
        <begin position="244"/>
        <end position="250"/>
    </location>
    <ligand>
        <name>NADP(+)</name>
        <dbReference type="ChEBI" id="CHEBI:58349"/>
    </ligand>
</feature>
<feature type="binding site" evidence="1">
    <location>
        <begin position="277"/>
        <end position="279"/>
    </location>
    <ligand>
        <name>NADP(+)</name>
        <dbReference type="ChEBI" id="CHEBI:58349"/>
    </ligand>
</feature>
<feature type="binding site" evidence="1">
    <location>
        <position position="327"/>
    </location>
    <ligand>
        <name>NADP(+)</name>
        <dbReference type="ChEBI" id="CHEBI:58349"/>
    </ligand>
</feature>
<reference key="1">
    <citation type="journal article" date="1997" name="Gene">
        <title>Cloning and sequencing of a 35.7 kb in the 70 degree-73 degree region of the Bacillus subtilis genome reveal genes for a new two-component system, three spore germination proteins, an iron uptake system and a general stress response protein.</title>
        <authorList>
            <person name="Yamamoto H."/>
            <person name="Uchiyama S."/>
            <person name="Nugroho F.A."/>
            <person name="Sekiguchi J."/>
        </authorList>
    </citation>
    <scope>NUCLEOTIDE SEQUENCE [GENOMIC DNA]</scope>
    <source>
        <strain>168 / AC327</strain>
    </source>
</reference>
<reference key="2">
    <citation type="journal article" date="1997" name="Nature">
        <title>The complete genome sequence of the Gram-positive bacterium Bacillus subtilis.</title>
        <authorList>
            <person name="Kunst F."/>
            <person name="Ogasawara N."/>
            <person name="Moszer I."/>
            <person name="Albertini A.M."/>
            <person name="Alloni G."/>
            <person name="Azevedo V."/>
            <person name="Bertero M.G."/>
            <person name="Bessieres P."/>
            <person name="Bolotin A."/>
            <person name="Borchert S."/>
            <person name="Borriss R."/>
            <person name="Boursier L."/>
            <person name="Brans A."/>
            <person name="Braun M."/>
            <person name="Brignell S.C."/>
            <person name="Bron S."/>
            <person name="Brouillet S."/>
            <person name="Bruschi C.V."/>
            <person name="Caldwell B."/>
            <person name="Capuano V."/>
            <person name="Carter N.M."/>
            <person name="Choi S.-K."/>
            <person name="Codani J.-J."/>
            <person name="Connerton I.F."/>
            <person name="Cummings N.J."/>
            <person name="Daniel R.A."/>
            <person name="Denizot F."/>
            <person name="Devine K.M."/>
            <person name="Duesterhoeft A."/>
            <person name="Ehrlich S.D."/>
            <person name="Emmerson P.T."/>
            <person name="Entian K.-D."/>
            <person name="Errington J."/>
            <person name="Fabret C."/>
            <person name="Ferrari E."/>
            <person name="Foulger D."/>
            <person name="Fritz C."/>
            <person name="Fujita M."/>
            <person name="Fujita Y."/>
            <person name="Fuma S."/>
            <person name="Galizzi A."/>
            <person name="Galleron N."/>
            <person name="Ghim S.-Y."/>
            <person name="Glaser P."/>
            <person name="Goffeau A."/>
            <person name="Golightly E.J."/>
            <person name="Grandi G."/>
            <person name="Guiseppi G."/>
            <person name="Guy B.J."/>
            <person name="Haga K."/>
            <person name="Haiech J."/>
            <person name="Harwood C.R."/>
            <person name="Henaut A."/>
            <person name="Hilbert H."/>
            <person name="Holsappel S."/>
            <person name="Hosono S."/>
            <person name="Hullo M.-F."/>
            <person name="Itaya M."/>
            <person name="Jones L.-M."/>
            <person name="Joris B."/>
            <person name="Karamata D."/>
            <person name="Kasahara Y."/>
            <person name="Klaerr-Blanchard M."/>
            <person name="Klein C."/>
            <person name="Kobayashi Y."/>
            <person name="Koetter P."/>
            <person name="Koningstein G."/>
            <person name="Krogh S."/>
            <person name="Kumano M."/>
            <person name="Kurita K."/>
            <person name="Lapidus A."/>
            <person name="Lardinois S."/>
            <person name="Lauber J."/>
            <person name="Lazarevic V."/>
            <person name="Lee S.-M."/>
            <person name="Levine A."/>
            <person name="Liu H."/>
            <person name="Masuda S."/>
            <person name="Mauel C."/>
            <person name="Medigue C."/>
            <person name="Medina N."/>
            <person name="Mellado R.P."/>
            <person name="Mizuno M."/>
            <person name="Moestl D."/>
            <person name="Nakai S."/>
            <person name="Noback M."/>
            <person name="Noone D."/>
            <person name="O'Reilly M."/>
            <person name="Ogawa K."/>
            <person name="Ogiwara A."/>
            <person name="Oudega B."/>
            <person name="Park S.-H."/>
            <person name="Parro V."/>
            <person name="Pohl T.M."/>
            <person name="Portetelle D."/>
            <person name="Porwollik S."/>
            <person name="Prescott A.M."/>
            <person name="Presecan E."/>
            <person name="Pujic P."/>
            <person name="Purnelle B."/>
            <person name="Rapoport G."/>
            <person name="Rey M."/>
            <person name="Reynolds S."/>
            <person name="Rieger M."/>
            <person name="Rivolta C."/>
            <person name="Rocha E."/>
            <person name="Roche B."/>
            <person name="Rose M."/>
            <person name="Sadaie Y."/>
            <person name="Sato T."/>
            <person name="Scanlan E."/>
            <person name="Schleich S."/>
            <person name="Schroeter R."/>
            <person name="Scoffone F."/>
            <person name="Sekiguchi J."/>
            <person name="Sekowska A."/>
            <person name="Seror S.J."/>
            <person name="Serror P."/>
            <person name="Shin B.-S."/>
            <person name="Soldo B."/>
            <person name="Sorokin A."/>
            <person name="Tacconi E."/>
            <person name="Takagi T."/>
            <person name="Takahashi H."/>
            <person name="Takemaru K."/>
            <person name="Takeuchi M."/>
            <person name="Tamakoshi A."/>
            <person name="Tanaka T."/>
            <person name="Terpstra P."/>
            <person name="Tognoni A."/>
            <person name="Tosato V."/>
            <person name="Uchiyama S."/>
            <person name="Vandenbol M."/>
            <person name="Vannier F."/>
            <person name="Vassarotti A."/>
            <person name="Viari A."/>
            <person name="Wambutt R."/>
            <person name="Wedler E."/>
            <person name="Wedler H."/>
            <person name="Weitzenegger T."/>
            <person name="Winters P."/>
            <person name="Wipat A."/>
            <person name="Yamamoto H."/>
            <person name="Yamane K."/>
            <person name="Yasumoto K."/>
            <person name="Yata K."/>
            <person name="Yoshida K."/>
            <person name="Yoshikawa H.-F."/>
            <person name="Zumstein E."/>
            <person name="Yoshikawa H."/>
            <person name="Danchin A."/>
        </authorList>
    </citation>
    <scope>NUCLEOTIDE SEQUENCE [LARGE SCALE GENOMIC DNA]</scope>
    <source>
        <strain>168</strain>
    </source>
</reference>
<reference key="3">
    <citation type="journal article" date="2007" name="Proteomics">
        <title>Transcriptome and proteome analyses in response to 2-methylhydroquinone and 6-brom-2-vinyl-chroman-4-on reveal different degradation systems involved in the catabolism of aromatic compounds in Bacillus subtilis.</title>
        <authorList>
            <person name="Nguyen V.D."/>
            <person name="Wolf C."/>
            <person name="Maeder U."/>
            <person name="Lalk M."/>
            <person name="Langer P."/>
            <person name="Lindequist U."/>
            <person name="Hecker M."/>
            <person name="Antelmann H."/>
        </authorList>
    </citation>
    <scope>INDUCTION</scope>
</reference>
<protein>
    <recommendedName>
        <fullName>Putative NADP-dependent oxidoreductase YfmJ</fullName>
        <ecNumber>1.-.-.-</ecNumber>
    </recommendedName>
</protein>
<evidence type="ECO:0000250" key="1"/>
<evidence type="ECO:0000269" key="2">
    <source>
    </source>
</evidence>
<evidence type="ECO:0000305" key="3"/>
<keyword id="KW-0058">Aromatic hydrocarbons catabolism</keyword>
<keyword id="KW-0216">Detoxification</keyword>
<keyword id="KW-0521">NADP</keyword>
<keyword id="KW-0560">Oxidoreductase</keyword>
<keyword id="KW-1185">Reference proteome</keyword>
<proteinExistence type="evidence at transcript level"/>
<name>YFMJ_BACSU</name>
<accession>O34812</accession>
<accession>Q79ES7</accession>
<gene>
    <name type="primary">yfmJ</name>
    <name type="ordered locus">BSU07450</name>
</gene>
<comment type="function">
    <text evidence="3">Putative quinone oxidoreductase that may contribute to the degradation of aromatic compounds.</text>
</comment>
<comment type="induction">
    <text evidence="2">induced by stress due to exposure to 2-methylhydroquinone (2-MHQ).</text>
</comment>
<comment type="similarity">
    <text evidence="3">Belongs to the NADP-dependent oxidoreductase L4BD family.</text>
</comment>
<sequence length="339" mass="36663">MTASQQQIQLARRPQGIPVHEDFRFETIPVPEPKQGEVLVKTLYVSVDPYMRGRMQDTKSYVEPFALDKALSGGVIAEVVSDGNHLKKGDIVIGNLSWQEFSAVSESALRKIDTSLAPASAYLGILGMTGLTAYFGLLDIGRPKEGETVVVSGAAGAVGSTVGQIAKIKGARVVGIAGSDEKIDYLKQELQFDEAINYKTADDIQKALQNACPDGVDVYFDNVGGPISDAVMNLLNEFARIPVCGAISSYNAESEADDMGPRVQSKLIKTKSLMQGFIVSDYSDRFSEGAKQLAEWLKAGKLHYEETITEGFENIPDAFLGLFKGENKGKQLIKVSDPS</sequence>
<organism>
    <name type="scientific">Bacillus subtilis (strain 168)</name>
    <dbReference type="NCBI Taxonomy" id="224308"/>
    <lineage>
        <taxon>Bacteria</taxon>
        <taxon>Bacillati</taxon>
        <taxon>Bacillota</taxon>
        <taxon>Bacilli</taxon>
        <taxon>Bacillales</taxon>
        <taxon>Bacillaceae</taxon>
        <taxon>Bacillus</taxon>
    </lineage>
</organism>